<protein>
    <recommendedName>
        <fullName>Calsenilin</fullName>
    </recommendedName>
    <alternativeName>
        <fullName>A-type potassium channel modulatory protein 3</fullName>
    </alternativeName>
    <alternativeName>
        <fullName>DRE-antagonist modulator</fullName>
        <shortName>DREAM</shortName>
    </alternativeName>
    <alternativeName>
        <fullName>Kv channel-interacting protein 3</fullName>
        <shortName>KChIP3</shortName>
    </alternativeName>
</protein>
<dbReference type="EMBL" id="AF120102">
    <property type="protein sequence ID" value="AAD20350.1"/>
    <property type="molecule type" value="mRNA"/>
</dbReference>
<dbReference type="EMBL" id="AJ131730">
    <property type="protein sequence ID" value="CAB56836.1"/>
    <property type="molecule type" value="mRNA"/>
</dbReference>
<dbReference type="EMBL" id="AJ131730">
    <property type="protein sequence ID" value="CAB56835.1"/>
    <property type="molecule type" value="mRNA"/>
</dbReference>
<dbReference type="EMBL" id="AF199599">
    <property type="protein sequence ID" value="AAF33684.1"/>
    <property type="molecule type" value="mRNA"/>
</dbReference>
<dbReference type="EMBL" id="DQ148485">
    <property type="protein sequence ID" value="AAZ77802.1"/>
    <property type="molecule type" value="mRNA"/>
</dbReference>
<dbReference type="EMBL" id="DQ148486">
    <property type="protein sequence ID" value="AAZ77803.1"/>
    <property type="molecule type" value="mRNA"/>
</dbReference>
<dbReference type="EMBL" id="AF367022">
    <property type="protein sequence ID" value="AAK53711.1"/>
    <property type="molecule type" value="mRNA"/>
</dbReference>
<dbReference type="EMBL" id="BT020075">
    <property type="protein sequence ID" value="AAV38878.1"/>
    <property type="molecule type" value="mRNA"/>
</dbReference>
<dbReference type="EMBL" id="AK315437">
    <property type="protein sequence ID" value="BAG37825.1"/>
    <property type="molecule type" value="mRNA"/>
</dbReference>
<dbReference type="EMBL" id="AC009238">
    <property type="protein sequence ID" value="AAY14752.1"/>
    <property type="molecule type" value="Genomic_DNA"/>
</dbReference>
<dbReference type="EMBL" id="CH471219">
    <property type="protein sequence ID" value="EAX10724.1"/>
    <property type="molecule type" value="Genomic_DNA"/>
</dbReference>
<dbReference type="EMBL" id="BC012850">
    <property type="protein sequence ID" value="AAH12850.1"/>
    <property type="molecule type" value="mRNA"/>
</dbReference>
<dbReference type="CCDS" id="CCDS2013.1">
    <molecule id="Q9Y2W7-1"/>
</dbReference>
<dbReference type="CCDS" id="CCDS33245.1">
    <molecule id="Q9Y2W7-3"/>
</dbReference>
<dbReference type="RefSeq" id="NP_001030086.1">
    <molecule id="Q9Y2W7-3"/>
    <property type="nucleotide sequence ID" value="NM_001034914.2"/>
</dbReference>
<dbReference type="RefSeq" id="NP_038462.1">
    <molecule id="Q9Y2W7-1"/>
    <property type="nucleotide sequence ID" value="NM_013434.5"/>
</dbReference>
<dbReference type="PDB" id="2E6W">
    <property type="method" value="NMR"/>
    <property type="chains" value="A=161-256"/>
</dbReference>
<dbReference type="PDBsum" id="2E6W"/>
<dbReference type="SMR" id="Q9Y2W7"/>
<dbReference type="BioGRID" id="119042">
    <property type="interactions" value="33"/>
</dbReference>
<dbReference type="FunCoup" id="Q9Y2W7">
    <property type="interactions" value="414"/>
</dbReference>
<dbReference type="IntAct" id="Q9Y2W7">
    <property type="interactions" value="25"/>
</dbReference>
<dbReference type="STRING" id="9606.ENSP00000295225"/>
<dbReference type="TCDB" id="8.A.82.2.5">
    <property type="family name" value="the calmodulin calcium binding protein (calmodulin) family"/>
</dbReference>
<dbReference type="iPTMnet" id="Q9Y2W7"/>
<dbReference type="PhosphoSitePlus" id="Q9Y2W7"/>
<dbReference type="BioMuta" id="KCNIP3"/>
<dbReference type="DMDM" id="13431428"/>
<dbReference type="MassIVE" id="Q9Y2W7"/>
<dbReference type="PaxDb" id="9606-ENSP00000295225"/>
<dbReference type="PeptideAtlas" id="Q9Y2W7"/>
<dbReference type="ProteomicsDB" id="43500"/>
<dbReference type="ProteomicsDB" id="85919">
    <molecule id="Q9Y2W7-1"/>
</dbReference>
<dbReference type="ProteomicsDB" id="85920">
    <molecule id="Q9Y2W7-2"/>
</dbReference>
<dbReference type="ProteomicsDB" id="85921">
    <molecule id="Q9Y2W7-3"/>
</dbReference>
<dbReference type="ABCD" id="Q9Y2W7">
    <property type="antibodies" value="2 sequenced antibodies"/>
</dbReference>
<dbReference type="Antibodypedia" id="4181">
    <property type="antibodies" value="544 antibodies from 40 providers"/>
</dbReference>
<dbReference type="DNASU" id="30818"/>
<dbReference type="Ensembl" id="ENST00000295225.10">
    <molecule id="Q9Y2W7-1"/>
    <property type="protein sequence ID" value="ENSP00000295225.5"/>
    <property type="gene ID" value="ENSG00000115041.14"/>
</dbReference>
<dbReference type="Ensembl" id="ENST00000468529.1">
    <molecule id="Q9Y2W7-3"/>
    <property type="protein sequence ID" value="ENSP00000417499.1"/>
    <property type="gene ID" value="ENSG00000115041.14"/>
</dbReference>
<dbReference type="GeneID" id="30818"/>
<dbReference type="KEGG" id="hsa:30818"/>
<dbReference type="MANE-Select" id="ENST00000295225.10">
    <property type="protein sequence ID" value="ENSP00000295225.5"/>
    <property type="RefSeq nucleotide sequence ID" value="NM_013434.5"/>
    <property type="RefSeq protein sequence ID" value="NP_038462.1"/>
</dbReference>
<dbReference type="UCSC" id="uc002sup.4">
    <molecule id="Q9Y2W7-1"/>
    <property type="organism name" value="human"/>
</dbReference>
<dbReference type="AGR" id="HGNC:15523"/>
<dbReference type="CTD" id="30818"/>
<dbReference type="DisGeNET" id="30818"/>
<dbReference type="GeneCards" id="KCNIP3"/>
<dbReference type="HGNC" id="HGNC:15523">
    <property type="gene designation" value="KCNIP3"/>
</dbReference>
<dbReference type="HPA" id="ENSG00000115041">
    <property type="expression patterns" value="Tissue enhanced (brain, lymphoid tissue, parathyroid gland)"/>
</dbReference>
<dbReference type="MIM" id="604662">
    <property type="type" value="gene"/>
</dbReference>
<dbReference type="neXtProt" id="NX_Q9Y2W7"/>
<dbReference type="OpenTargets" id="ENSG00000115041"/>
<dbReference type="PharmGKB" id="PA26934"/>
<dbReference type="VEuPathDB" id="HostDB:ENSG00000115041"/>
<dbReference type="eggNOG" id="KOG0044">
    <property type="taxonomic scope" value="Eukaryota"/>
</dbReference>
<dbReference type="GeneTree" id="ENSGT00940000158782"/>
<dbReference type="HOGENOM" id="CLU_072366_2_2_1"/>
<dbReference type="InParanoid" id="Q9Y2W7"/>
<dbReference type="OMA" id="TITKKEW"/>
<dbReference type="OrthoDB" id="191686at2759"/>
<dbReference type="PAN-GO" id="Q9Y2W7">
    <property type="GO annotations" value="8 GO annotations based on evolutionary models"/>
</dbReference>
<dbReference type="PhylomeDB" id="Q9Y2W7"/>
<dbReference type="TreeFam" id="TF318560"/>
<dbReference type="PathwayCommons" id="Q9Y2W7"/>
<dbReference type="Reactome" id="R-HSA-5576894">
    <property type="pathway name" value="Phase 1 - inactivation of fast Na+ channels"/>
</dbReference>
<dbReference type="Reactome" id="R-HSA-9768777">
    <property type="pathway name" value="Regulation of NPAS4 gene transcription"/>
</dbReference>
<dbReference type="SignaLink" id="Q9Y2W7"/>
<dbReference type="SIGNOR" id="Q9Y2W7"/>
<dbReference type="BioGRID-ORCS" id="30818">
    <property type="hits" value="22 hits in 1155 CRISPR screens"/>
</dbReference>
<dbReference type="ChiTaRS" id="KCNIP3">
    <property type="organism name" value="human"/>
</dbReference>
<dbReference type="EvolutionaryTrace" id="Q9Y2W7"/>
<dbReference type="GeneWiki" id="Calsenilin"/>
<dbReference type="GenomeRNAi" id="30818"/>
<dbReference type="Pharos" id="Q9Y2W7">
    <property type="development level" value="Tbio"/>
</dbReference>
<dbReference type="PRO" id="PR:Q9Y2W7"/>
<dbReference type="Proteomes" id="UP000005640">
    <property type="component" value="Chromosome 2"/>
</dbReference>
<dbReference type="RNAct" id="Q9Y2W7">
    <property type="molecule type" value="protein"/>
</dbReference>
<dbReference type="Bgee" id="ENSG00000115041">
    <property type="expression patterns" value="Expressed in right frontal lobe and 110 other cell types or tissues"/>
</dbReference>
<dbReference type="ExpressionAtlas" id="Q9Y2W7">
    <property type="expression patterns" value="baseline and differential"/>
</dbReference>
<dbReference type="GO" id="GO:0005829">
    <property type="term" value="C:cytosol"/>
    <property type="evidence" value="ECO:0000250"/>
    <property type="project" value="UniProtKB"/>
</dbReference>
<dbReference type="GO" id="GO:0005783">
    <property type="term" value="C:endoplasmic reticulum"/>
    <property type="evidence" value="ECO:0007669"/>
    <property type="project" value="UniProtKB-SubCell"/>
</dbReference>
<dbReference type="GO" id="GO:0005794">
    <property type="term" value="C:Golgi apparatus"/>
    <property type="evidence" value="ECO:0007669"/>
    <property type="project" value="UniProtKB-SubCell"/>
</dbReference>
<dbReference type="GO" id="GO:0005634">
    <property type="term" value="C:nucleus"/>
    <property type="evidence" value="ECO:0000318"/>
    <property type="project" value="GO_Central"/>
</dbReference>
<dbReference type="GO" id="GO:0005886">
    <property type="term" value="C:plasma membrane"/>
    <property type="evidence" value="ECO:0000304"/>
    <property type="project" value="Reactome"/>
</dbReference>
<dbReference type="GO" id="GO:0008076">
    <property type="term" value="C:voltage-gated potassium channel complex"/>
    <property type="evidence" value="ECO:0000250"/>
    <property type="project" value="UniProtKB"/>
</dbReference>
<dbReference type="GO" id="GO:0005509">
    <property type="term" value="F:calcium ion binding"/>
    <property type="evidence" value="ECO:0000318"/>
    <property type="project" value="GO_Central"/>
</dbReference>
<dbReference type="GO" id="GO:0001227">
    <property type="term" value="F:DNA-binding transcription repressor activity, RNA polymerase II-specific"/>
    <property type="evidence" value="ECO:0000314"/>
    <property type="project" value="ARUK-UCL"/>
</dbReference>
<dbReference type="GO" id="GO:0005267">
    <property type="term" value="F:potassium channel activity"/>
    <property type="evidence" value="ECO:0007669"/>
    <property type="project" value="UniProtKB-KW"/>
</dbReference>
<dbReference type="GO" id="GO:0015459">
    <property type="term" value="F:potassium channel regulator activity"/>
    <property type="evidence" value="ECO:0000250"/>
    <property type="project" value="UniProtKB"/>
</dbReference>
<dbReference type="GO" id="GO:0000978">
    <property type="term" value="F:RNA polymerase II cis-regulatory region sequence-specific DNA binding"/>
    <property type="evidence" value="ECO:0000314"/>
    <property type="project" value="ARUK-UCL"/>
</dbReference>
<dbReference type="GO" id="GO:0006915">
    <property type="term" value="P:apoptotic process"/>
    <property type="evidence" value="ECO:0007669"/>
    <property type="project" value="UniProtKB-KW"/>
</dbReference>
<dbReference type="GO" id="GO:0000122">
    <property type="term" value="P:negative regulation of transcription by RNA polymerase II"/>
    <property type="evidence" value="ECO:0000314"/>
    <property type="project" value="ARUK-UCL"/>
</dbReference>
<dbReference type="GO" id="GO:0072659">
    <property type="term" value="P:protein localization to plasma membrane"/>
    <property type="evidence" value="ECO:0000250"/>
    <property type="project" value="UniProtKB"/>
</dbReference>
<dbReference type="GO" id="GO:1901379">
    <property type="term" value="P:regulation of potassium ion transmembrane transport"/>
    <property type="evidence" value="ECO:0000250"/>
    <property type="project" value="UniProtKB"/>
</dbReference>
<dbReference type="GO" id="GO:0009966">
    <property type="term" value="P:regulation of signal transduction"/>
    <property type="evidence" value="ECO:0000318"/>
    <property type="project" value="GO_Central"/>
</dbReference>
<dbReference type="GO" id="GO:0007165">
    <property type="term" value="P:signal transduction"/>
    <property type="evidence" value="ECO:0000304"/>
    <property type="project" value="ProtInc"/>
</dbReference>
<dbReference type="CDD" id="cd00051">
    <property type="entry name" value="EFh"/>
    <property type="match status" value="2"/>
</dbReference>
<dbReference type="FunFam" id="1.10.238.10:FF:000043">
    <property type="entry name" value="Kv channel-interacting protein 1 isoform 2"/>
    <property type="match status" value="1"/>
</dbReference>
<dbReference type="Gene3D" id="1.10.238.10">
    <property type="entry name" value="EF-hand"/>
    <property type="match status" value="1"/>
</dbReference>
<dbReference type="InterPro" id="IPR011992">
    <property type="entry name" value="EF-hand-dom_pair"/>
</dbReference>
<dbReference type="InterPro" id="IPR018247">
    <property type="entry name" value="EF_Hand_1_Ca_BS"/>
</dbReference>
<dbReference type="InterPro" id="IPR002048">
    <property type="entry name" value="EF_hand_dom"/>
</dbReference>
<dbReference type="InterPro" id="IPR028846">
    <property type="entry name" value="Recoverin"/>
</dbReference>
<dbReference type="PANTHER" id="PTHR23055">
    <property type="entry name" value="CALCIUM BINDING PROTEINS"/>
    <property type="match status" value="1"/>
</dbReference>
<dbReference type="PANTHER" id="PTHR23055:SF165">
    <property type="entry name" value="CALSENILIN"/>
    <property type="match status" value="1"/>
</dbReference>
<dbReference type="Pfam" id="PF13499">
    <property type="entry name" value="EF-hand_7"/>
    <property type="match status" value="1"/>
</dbReference>
<dbReference type="Pfam" id="PF13833">
    <property type="entry name" value="EF-hand_8"/>
    <property type="match status" value="1"/>
</dbReference>
<dbReference type="PRINTS" id="PR00450">
    <property type="entry name" value="RECOVERIN"/>
</dbReference>
<dbReference type="SMART" id="SM00054">
    <property type="entry name" value="EFh"/>
    <property type="match status" value="3"/>
</dbReference>
<dbReference type="SUPFAM" id="SSF47473">
    <property type="entry name" value="EF-hand"/>
    <property type="match status" value="1"/>
</dbReference>
<dbReference type="PROSITE" id="PS00018">
    <property type="entry name" value="EF_HAND_1"/>
    <property type="match status" value="2"/>
</dbReference>
<dbReference type="PROSITE" id="PS50222">
    <property type="entry name" value="EF_HAND_2"/>
    <property type="match status" value="3"/>
</dbReference>
<name>CSEN_HUMAN</name>
<reference key="1">
    <citation type="journal article" date="1998" name="Nat. Med.">
        <title>Calsenilin: a calcium-binding protein that interacts with the presenilins and regulates the levels of a presenilin fragment.</title>
        <authorList>
            <person name="Buxbaum J.D."/>
            <person name="Choi E.K."/>
            <person name="Luo Y."/>
            <person name="Lilliehook C."/>
            <person name="Crowley A.C."/>
            <person name="Merriam D.E."/>
            <person name="Wasco W."/>
        </authorList>
    </citation>
    <scope>NUCLEOTIDE SEQUENCE [MRNA] (ISOFORM 1)</scope>
    <scope>FUNCTION IN PRESENILIN REGULATION</scope>
</reference>
<reference key="2">
    <citation type="journal article" date="1999" name="Nature">
        <title>DREAM is a Ca2+-regulated transcriptional repressor.</title>
        <authorList>
            <person name="Carrion A.M."/>
            <person name="Link W.A."/>
            <person name="Ledo F."/>
            <person name="Mellstrom B."/>
            <person name="Naranjo J.R."/>
        </authorList>
    </citation>
    <scope>NUCLEOTIDE SEQUENCE [MRNA] (ISOFORM 1)</scope>
    <scope>FUNCTION IN TRANSCRIPTION REGULATION</scope>
    <source>
        <tissue>Caudate nucleus</tissue>
    </source>
</reference>
<reference key="3">
    <citation type="journal article" date="2000" name="Nature">
        <title>Modulation of A-type potassium channels by a family of calcium sensors.</title>
        <authorList>
            <person name="An W.F."/>
            <person name="Bowlby M.R."/>
            <person name="Betty M."/>
            <person name="Cao J."/>
            <person name="Ling H.-P."/>
            <person name="Mendoza G."/>
            <person name="Hinson J.W."/>
            <person name="Mattsson K.I."/>
            <person name="Strassle B.W."/>
            <person name="Trimmer J.S."/>
            <person name="Rhodes K.J."/>
        </authorList>
    </citation>
    <scope>NUCLEOTIDE SEQUENCE [MRNA] (ISOFORM 1)</scope>
    <scope>FUNCTION IN POTASSIUM TRANSPORT</scope>
</reference>
<reference key="4">
    <citation type="journal article" date="2005" name="Genomics">
        <title>Structure, alternative splicing, and expression of the human and mouse KCNIP gene family.</title>
        <authorList>
            <person name="Pruunsild P."/>
            <person name="Timmusk T."/>
        </authorList>
    </citation>
    <scope>NUCLEOTIDE SEQUENCE [MRNA] (ISOFORMS 1 AND 3)</scope>
    <scope>ALTERNATIVE SPLICING</scope>
</reference>
<reference key="5">
    <citation type="submission" date="2001-03" db="EMBL/GenBank/DDBJ databases">
        <authorList>
            <person name="Isbrandt D."/>
            <person name="Pongs O."/>
        </authorList>
    </citation>
    <scope>NUCLEOTIDE SEQUENCE [MRNA] (ISOFORM 2)</scope>
</reference>
<reference key="6">
    <citation type="submission" date="2003-05" db="EMBL/GenBank/DDBJ databases">
        <title>Cloning of human full-length CDSs in BD Creator(TM) system donor vector.</title>
        <authorList>
            <person name="Kalnine N."/>
            <person name="Chen X."/>
            <person name="Rolfs A."/>
            <person name="Halleck A."/>
            <person name="Hines L."/>
            <person name="Eisenstein S."/>
            <person name="Koundinya M."/>
            <person name="Raphael J."/>
            <person name="Moreira D."/>
            <person name="Kelley T."/>
            <person name="LaBaer J."/>
            <person name="Lin Y."/>
            <person name="Phelan M."/>
            <person name="Farmer A."/>
        </authorList>
    </citation>
    <scope>NUCLEOTIDE SEQUENCE [LARGE SCALE MRNA] (ISOFORM 1)</scope>
</reference>
<reference key="7">
    <citation type="journal article" date="2004" name="Nat. Genet.">
        <title>Complete sequencing and characterization of 21,243 full-length human cDNAs.</title>
        <authorList>
            <person name="Ota T."/>
            <person name="Suzuki Y."/>
            <person name="Nishikawa T."/>
            <person name="Otsuki T."/>
            <person name="Sugiyama T."/>
            <person name="Irie R."/>
            <person name="Wakamatsu A."/>
            <person name="Hayashi K."/>
            <person name="Sato H."/>
            <person name="Nagai K."/>
            <person name="Kimura K."/>
            <person name="Makita H."/>
            <person name="Sekine M."/>
            <person name="Obayashi M."/>
            <person name="Nishi T."/>
            <person name="Shibahara T."/>
            <person name="Tanaka T."/>
            <person name="Ishii S."/>
            <person name="Yamamoto J."/>
            <person name="Saito K."/>
            <person name="Kawai Y."/>
            <person name="Isono Y."/>
            <person name="Nakamura Y."/>
            <person name="Nagahari K."/>
            <person name="Murakami K."/>
            <person name="Yasuda T."/>
            <person name="Iwayanagi T."/>
            <person name="Wagatsuma M."/>
            <person name="Shiratori A."/>
            <person name="Sudo H."/>
            <person name="Hosoiri T."/>
            <person name="Kaku Y."/>
            <person name="Kodaira H."/>
            <person name="Kondo H."/>
            <person name="Sugawara M."/>
            <person name="Takahashi M."/>
            <person name="Kanda K."/>
            <person name="Yokoi T."/>
            <person name="Furuya T."/>
            <person name="Kikkawa E."/>
            <person name="Omura Y."/>
            <person name="Abe K."/>
            <person name="Kamihara K."/>
            <person name="Katsuta N."/>
            <person name="Sato K."/>
            <person name="Tanikawa M."/>
            <person name="Yamazaki M."/>
            <person name="Ninomiya K."/>
            <person name="Ishibashi T."/>
            <person name="Yamashita H."/>
            <person name="Murakawa K."/>
            <person name="Fujimori K."/>
            <person name="Tanai H."/>
            <person name="Kimata M."/>
            <person name="Watanabe M."/>
            <person name="Hiraoka S."/>
            <person name="Chiba Y."/>
            <person name="Ishida S."/>
            <person name="Ono Y."/>
            <person name="Takiguchi S."/>
            <person name="Watanabe S."/>
            <person name="Yosida M."/>
            <person name="Hotuta T."/>
            <person name="Kusano J."/>
            <person name="Kanehori K."/>
            <person name="Takahashi-Fujii A."/>
            <person name="Hara H."/>
            <person name="Tanase T.-O."/>
            <person name="Nomura Y."/>
            <person name="Togiya S."/>
            <person name="Komai F."/>
            <person name="Hara R."/>
            <person name="Takeuchi K."/>
            <person name="Arita M."/>
            <person name="Imose N."/>
            <person name="Musashino K."/>
            <person name="Yuuki H."/>
            <person name="Oshima A."/>
            <person name="Sasaki N."/>
            <person name="Aotsuka S."/>
            <person name="Yoshikawa Y."/>
            <person name="Matsunawa H."/>
            <person name="Ichihara T."/>
            <person name="Shiohata N."/>
            <person name="Sano S."/>
            <person name="Moriya S."/>
            <person name="Momiyama H."/>
            <person name="Satoh N."/>
            <person name="Takami S."/>
            <person name="Terashima Y."/>
            <person name="Suzuki O."/>
            <person name="Nakagawa S."/>
            <person name="Senoh A."/>
            <person name="Mizoguchi H."/>
            <person name="Goto Y."/>
            <person name="Shimizu F."/>
            <person name="Wakebe H."/>
            <person name="Hishigaki H."/>
            <person name="Watanabe T."/>
            <person name="Sugiyama A."/>
            <person name="Takemoto M."/>
            <person name="Kawakami B."/>
            <person name="Yamazaki M."/>
            <person name="Watanabe K."/>
            <person name="Kumagai A."/>
            <person name="Itakura S."/>
            <person name="Fukuzumi Y."/>
            <person name="Fujimori Y."/>
            <person name="Komiyama M."/>
            <person name="Tashiro H."/>
            <person name="Tanigami A."/>
            <person name="Fujiwara T."/>
            <person name="Ono T."/>
            <person name="Yamada K."/>
            <person name="Fujii Y."/>
            <person name="Ozaki K."/>
            <person name="Hirao M."/>
            <person name="Ohmori Y."/>
            <person name="Kawabata A."/>
            <person name="Hikiji T."/>
            <person name="Kobatake N."/>
            <person name="Inagaki H."/>
            <person name="Ikema Y."/>
            <person name="Okamoto S."/>
            <person name="Okitani R."/>
            <person name="Kawakami T."/>
            <person name="Noguchi S."/>
            <person name="Itoh T."/>
            <person name="Shigeta K."/>
            <person name="Senba T."/>
            <person name="Matsumura K."/>
            <person name="Nakajima Y."/>
            <person name="Mizuno T."/>
            <person name="Morinaga M."/>
            <person name="Sasaki M."/>
            <person name="Togashi T."/>
            <person name="Oyama M."/>
            <person name="Hata H."/>
            <person name="Watanabe M."/>
            <person name="Komatsu T."/>
            <person name="Mizushima-Sugano J."/>
            <person name="Satoh T."/>
            <person name="Shirai Y."/>
            <person name="Takahashi Y."/>
            <person name="Nakagawa K."/>
            <person name="Okumura K."/>
            <person name="Nagase T."/>
            <person name="Nomura N."/>
            <person name="Kikuchi H."/>
            <person name="Masuho Y."/>
            <person name="Yamashita R."/>
            <person name="Nakai K."/>
            <person name="Yada T."/>
            <person name="Nakamura Y."/>
            <person name="Ohara O."/>
            <person name="Isogai T."/>
            <person name="Sugano S."/>
        </authorList>
    </citation>
    <scope>NUCLEOTIDE SEQUENCE [LARGE SCALE MRNA] (ISOFORM 1)</scope>
    <source>
        <tissue>Brain</tissue>
    </source>
</reference>
<reference key="8">
    <citation type="journal article" date="2005" name="Nature">
        <title>Generation and annotation of the DNA sequences of human chromosomes 2 and 4.</title>
        <authorList>
            <person name="Hillier L.W."/>
            <person name="Graves T.A."/>
            <person name="Fulton R.S."/>
            <person name="Fulton L.A."/>
            <person name="Pepin K.H."/>
            <person name="Minx P."/>
            <person name="Wagner-McPherson C."/>
            <person name="Layman D."/>
            <person name="Wylie K."/>
            <person name="Sekhon M."/>
            <person name="Becker M.C."/>
            <person name="Fewell G.A."/>
            <person name="Delehaunty K.D."/>
            <person name="Miner T.L."/>
            <person name="Nash W.E."/>
            <person name="Kremitzki C."/>
            <person name="Oddy L."/>
            <person name="Du H."/>
            <person name="Sun H."/>
            <person name="Bradshaw-Cordum H."/>
            <person name="Ali J."/>
            <person name="Carter J."/>
            <person name="Cordes M."/>
            <person name="Harris A."/>
            <person name="Isak A."/>
            <person name="van Brunt A."/>
            <person name="Nguyen C."/>
            <person name="Du F."/>
            <person name="Courtney L."/>
            <person name="Kalicki J."/>
            <person name="Ozersky P."/>
            <person name="Abbott S."/>
            <person name="Armstrong J."/>
            <person name="Belter E.A."/>
            <person name="Caruso L."/>
            <person name="Cedroni M."/>
            <person name="Cotton M."/>
            <person name="Davidson T."/>
            <person name="Desai A."/>
            <person name="Elliott G."/>
            <person name="Erb T."/>
            <person name="Fronick C."/>
            <person name="Gaige T."/>
            <person name="Haakenson W."/>
            <person name="Haglund K."/>
            <person name="Holmes A."/>
            <person name="Harkins R."/>
            <person name="Kim K."/>
            <person name="Kruchowski S.S."/>
            <person name="Strong C.M."/>
            <person name="Grewal N."/>
            <person name="Goyea E."/>
            <person name="Hou S."/>
            <person name="Levy A."/>
            <person name="Martinka S."/>
            <person name="Mead K."/>
            <person name="McLellan M.D."/>
            <person name="Meyer R."/>
            <person name="Randall-Maher J."/>
            <person name="Tomlinson C."/>
            <person name="Dauphin-Kohlberg S."/>
            <person name="Kozlowicz-Reilly A."/>
            <person name="Shah N."/>
            <person name="Swearengen-Shahid S."/>
            <person name="Snider J."/>
            <person name="Strong J.T."/>
            <person name="Thompson J."/>
            <person name="Yoakum M."/>
            <person name="Leonard S."/>
            <person name="Pearman C."/>
            <person name="Trani L."/>
            <person name="Radionenko M."/>
            <person name="Waligorski J.E."/>
            <person name="Wang C."/>
            <person name="Rock S.M."/>
            <person name="Tin-Wollam A.-M."/>
            <person name="Maupin R."/>
            <person name="Latreille P."/>
            <person name="Wendl M.C."/>
            <person name="Yang S.-P."/>
            <person name="Pohl C."/>
            <person name="Wallis J.W."/>
            <person name="Spieth J."/>
            <person name="Bieri T.A."/>
            <person name="Berkowicz N."/>
            <person name="Nelson J.O."/>
            <person name="Osborne J."/>
            <person name="Ding L."/>
            <person name="Meyer R."/>
            <person name="Sabo A."/>
            <person name="Shotland Y."/>
            <person name="Sinha P."/>
            <person name="Wohldmann P.E."/>
            <person name="Cook L.L."/>
            <person name="Hickenbotham M.T."/>
            <person name="Eldred J."/>
            <person name="Williams D."/>
            <person name="Jones T.A."/>
            <person name="She X."/>
            <person name="Ciccarelli F.D."/>
            <person name="Izaurralde E."/>
            <person name="Taylor J."/>
            <person name="Schmutz J."/>
            <person name="Myers R.M."/>
            <person name="Cox D.R."/>
            <person name="Huang X."/>
            <person name="McPherson J.D."/>
            <person name="Mardis E.R."/>
            <person name="Clifton S.W."/>
            <person name="Warren W.C."/>
            <person name="Chinwalla A.T."/>
            <person name="Eddy S.R."/>
            <person name="Marra M.A."/>
            <person name="Ovcharenko I."/>
            <person name="Furey T.S."/>
            <person name="Miller W."/>
            <person name="Eichler E.E."/>
            <person name="Bork P."/>
            <person name="Suyama M."/>
            <person name="Torrents D."/>
            <person name="Waterston R.H."/>
            <person name="Wilson R.K."/>
        </authorList>
    </citation>
    <scope>NUCLEOTIDE SEQUENCE [LARGE SCALE GENOMIC DNA]</scope>
</reference>
<reference key="9">
    <citation type="submission" date="2005-07" db="EMBL/GenBank/DDBJ databases">
        <authorList>
            <person name="Mural R.J."/>
            <person name="Istrail S."/>
            <person name="Sutton G."/>
            <person name="Florea L."/>
            <person name="Halpern A.L."/>
            <person name="Mobarry C.M."/>
            <person name="Lippert R."/>
            <person name="Walenz B."/>
            <person name="Shatkay H."/>
            <person name="Dew I."/>
            <person name="Miller J.R."/>
            <person name="Flanigan M.J."/>
            <person name="Edwards N.J."/>
            <person name="Bolanos R."/>
            <person name="Fasulo D."/>
            <person name="Halldorsson B.V."/>
            <person name="Hannenhalli S."/>
            <person name="Turner R."/>
            <person name="Yooseph S."/>
            <person name="Lu F."/>
            <person name="Nusskern D.R."/>
            <person name="Shue B.C."/>
            <person name="Zheng X.H."/>
            <person name="Zhong F."/>
            <person name="Delcher A.L."/>
            <person name="Huson D.H."/>
            <person name="Kravitz S.A."/>
            <person name="Mouchard L."/>
            <person name="Reinert K."/>
            <person name="Remington K.A."/>
            <person name="Clark A.G."/>
            <person name="Waterman M.S."/>
            <person name="Eichler E.E."/>
            <person name="Adams M.D."/>
            <person name="Hunkapiller M.W."/>
            <person name="Myers E.W."/>
            <person name="Venter J.C."/>
        </authorList>
    </citation>
    <scope>NUCLEOTIDE SEQUENCE [LARGE SCALE GENOMIC DNA]</scope>
</reference>
<reference key="10">
    <citation type="journal article" date="2004" name="Genome Res.">
        <title>The status, quality, and expansion of the NIH full-length cDNA project: the Mammalian Gene Collection (MGC).</title>
        <authorList>
            <consortium name="The MGC Project Team"/>
        </authorList>
    </citation>
    <scope>NUCLEOTIDE SEQUENCE [LARGE SCALE MRNA] (ISOFORM 1)</scope>
    <source>
        <tissue>Brain</tissue>
    </source>
</reference>
<reference key="11">
    <citation type="journal article" date="2001" name="J. Biol. Chem.">
        <title>Calsenilin is a substrate for caspase-3 that preferentially interacts with the familial Alzheimer's disease-associated C-terminal fragment of presenilin 2.</title>
        <authorList>
            <person name="Choi E.K."/>
            <person name="Zaidi N.F."/>
            <person name="Miller J.S."/>
            <person name="Crowley A.C."/>
            <person name="Merriam D.E."/>
            <person name="Lilliehook C."/>
            <person name="Buxbaum J.D."/>
            <person name="Wasco W."/>
        </authorList>
    </citation>
    <scope>INTERACTION WITH PSEN2</scope>
    <scope>SUBCELLULAR LOCATION</scope>
    <scope>PROTEOLYTIC PROCESSING</scope>
    <scope>MUTAGENESIS OF ASP-61 AND ASP-64</scope>
</reference>
<reference key="12">
    <citation type="journal article" date="2001" name="FASEB J.">
        <title>Pro-apoptotic function of calsenilin/DREAM/KChIP3.</title>
        <authorList>
            <person name="Jo D.G."/>
            <person name="Kim M.J."/>
            <person name="Choi Y.H."/>
            <person name="Kim I.K."/>
            <person name="Song Y.H."/>
            <person name="Woo H.N."/>
            <person name="Chung C.W."/>
            <person name="Jung Y.K."/>
        </authorList>
    </citation>
    <scope>FUNCTION IN APOPTOSIS</scope>
</reference>
<reference key="13">
    <citation type="journal article" date="2002" name="Mol. Cell. Neurosci.">
        <title>Calsenilin enhances apoptosis by altering endoplasmic reticulum calcium signaling.</title>
        <authorList>
            <person name="Lilliehook C."/>
            <person name="Chan S."/>
            <person name="Choi E.K."/>
            <person name="Zaidi N.F."/>
            <person name="Wasco W."/>
            <person name="Mattson M.P."/>
            <person name="Buxbaum J.D."/>
        </authorList>
    </citation>
    <scope>FUNCTION IN APOPTOSIS</scope>
</reference>
<reference key="14">
    <citation type="journal article" date="2003" name="J. Biol. Chem.">
        <title>A fundamental role for KChIPs in determining the molecular properties and trafficking of Kv4.2 potassium channels.</title>
        <authorList>
            <person name="Shibata R."/>
            <person name="Misonou H."/>
            <person name="Campomanes C.R."/>
            <person name="Anderson A.E."/>
            <person name="Schrader L.A."/>
            <person name="Doliveira L.C."/>
            <person name="Carroll K.I."/>
            <person name="Sweatt J.D."/>
            <person name="Rhodes K.J."/>
            <person name="Trimmer J.S."/>
        </authorList>
    </citation>
    <scope>FUNCTION IN POTASSIUM TRANSPORT</scope>
</reference>
<reference key="15">
    <citation type="journal article" date="2003" name="Mol. Cell. Neurosci.">
        <title>Phosphorylation of calsenilin at Ser63 regulates its cleavage by caspase-3.</title>
        <authorList>
            <person name="Choi E.K."/>
            <person name="Miller J.S."/>
            <person name="Zaidi N.F."/>
            <person name="Salih E."/>
            <person name="Buxbaum J.D."/>
            <person name="Wasco W."/>
        </authorList>
    </citation>
    <scope>PHOSPHORYLATION AT SER-63</scope>
</reference>
<reference key="16">
    <citation type="journal article" date="2004" name="J. Biol. Chem.">
        <title>KChIP3 rescues the functional expression of Shal channel tetramerization mutants.</title>
        <authorList>
            <person name="Kunjilwar K."/>
            <person name="Strang C."/>
            <person name="DeRubeis D."/>
            <person name="Pfaffinger P.J."/>
        </authorList>
    </citation>
    <scope>INTERACTION WITH KCND2</scope>
    <scope>FUNCTION IN POTASSIUM TRANSPORT</scope>
    <scope>SUBUNIT</scope>
    <scope>SUBCELLULAR LOCATION</scope>
</reference>
<reference key="17">
    <citation type="journal article" date="2004" name="J. Neurochem.">
        <title>Induction of pro-apoptotic calsenilin/DREAM/KChIP3 in Alzheimer's disease and cultured neurons after amyloid-beta exposure.</title>
        <authorList>
            <person name="Jo D.G."/>
            <person name="Lee J.Y."/>
            <person name="Hong Y.M."/>
            <person name="Song S."/>
            <person name="Mook-Jung I."/>
            <person name="Koh J.Y."/>
            <person name="Jung Y.K."/>
        </authorList>
    </citation>
    <scope>TISSUE SPECIFICITY</scope>
</reference>
<reference key="18">
    <citation type="journal article" date="2005" name="J. Physiol. (Lond.)">
        <title>Multiprotein assembly of Kv4.2, KChIP3 and DPP10 produces ternary channel complexes with ISA-like properties.</title>
        <authorList>
            <person name="Jerng H.H."/>
            <person name="Kunjilwar K."/>
            <person name="Pfaffinger P.J."/>
        </authorList>
    </citation>
    <scope>FUNCTION IN POTASSIUM TRANSPORT</scope>
</reference>
<reference key="19">
    <citation type="journal article" date="2008" name="J. Biol. Chem.">
        <title>Multiple Kv channel-interacting proteins contain an N-terminal transmembrane domain that regulates Kv4 channel trafficking and gating.</title>
        <authorList>
            <person name="Jerng H.H."/>
            <person name="Pfaffinger P.J."/>
        </authorList>
    </citation>
    <scope>FUNCTION IN POTASSIUM TRANSPORT</scope>
    <scope>INTERACTION WITH KCND2</scope>
    <scope>SUBCELLULAR LOCATION</scope>
</reference>
<reference key="20">
    <citation type="journal article" date="2011" name="Biochim. Biophys. Acta">
        <title>Sumoylation regulates nuclear localization of repressor DREAM.</title>
        <authorList>
            <person name="Palczewska M."/>
            <person name="Casafont I."/>
            <person name="Ghimire K."/>
            <person name="Rojas A.M."/>
            <person name="Valencia A."/>
            <person name="Lafarga M."/>
            <person name="Mellstrom B."/>
            <person name="Naranjo J.R."/>
        </authorList>
    </citation>
    <scope>SUMOYLATION AT LYS-26 AND LYS-90</scope>
    <scope>SUBCELLULAR LOCATION</scope>
</reference>
<reference key="21">
    <citation type="journal article" date="2007" name="Protein Sci.">
        <title>Solution structure and calcium-binding properties of EF-hands 3 and 4 of calsenilin.</title>
        <authorList>
            <person name="Yu L."/>
            <person name="Sun C."/>
            <person name="Mendoza R."/>
            <person name="Wang J."/>
            <person name="Matayoshi E.D."/>
            <person name="Hebert E."/>
            <person name="Pereda-Lopez A."/>
            <person name="Hajduk P.J."/>
            <person name="Olejniczak E.T."/>
        </authorList>
    </citation>
    <scope>STRUCTURE BY NMR OF 161-256</scope>
    <scope>SUBUNIT</scope>
    <scope>CALCIUM-BINDING</scope>
</reference>
<reference key="22">
    <citation type="journal article" date="2006" name="Science">
        <title>The consensus coding sequences of human breast and colorectal cancers.</title>
        <authorList>
            <person name="Sjoeblom T."/>
            <person name="Jones S."/>
            <person name="Wood L.D."/>
            <person name="Parsons D.W."/>
            <person name="Lin J."/>
            <person name="Barber T.D."/>
            <person name="Mandelker D."/>
            <person name="Leary R.J."/>
            <person name="Ptak J."/>
            <person name="Silliman N."/>
            <person name="Szabo S."/>
            <person name="Buckhaults P."/>
            <person name="Farrell C."/>
            <person name="Meeh P."/>
            <person name="Markowitz S.D."/>
            <person name="Willis J."/>
            <person name="Dawson D."/>
            <person name="Willson J.K.V."/>
            <person name="Gazdar A.F."/>
            <person name="Hartigan J."/>
            <person name="Wu L."/>
            <person name="Liu C."/>
            <person name="Parmigiani G."/>
            <person name="Park B.H."/>
            <person name="Bachman K.E."/>
            <person name="Papadopoulos N."/>
            <person name="Vogelstein B."/>
            <person name="Kinzler K.W."/>
            <person name="Velculescu V.E."/>
        </authorList>
    </citation>
    <scope>VARIANTS [LARGE SCALE ANALYSIS] SER-170 AND TYR-179</scope>
</reference>
<accession>Q9Y2W7</accession>
<accession>H7BY46</accession>
<accession>Q3YAC3</accession>
<accession>Q3YAC4</accession>
<accession>Q53TJ5</accession>
<accession>Q96T40</accession>
<accession>Q9UJ84</accession>
<accession>Q9UJ85</accession>
<gene>
    <name type="primary">KCNIP3</name>
    <name type="synonym">CSEN</name>
    <name type="synonym">DREAM</name>
    <name type="synonym">KCHIP3</name>
</gene>
<keyword id="KW-0002">3D-structure</keyword>
<keyword id="KW-0025">Alternative splicing</keyword>
<keyword id="KW-0053">Apoptosis</keyword>
<keyword id="KW-0106">Calcium</keyword>
<keyword id="KW-1003">Cell membrane</keyword>
<keyword id="KW-0963">Cytoplasm</keyword>
<keyword id="KW-0256">Endoplasmic reticulum</keyword>
<keyword id="KW-0333">Golgi apparatus</keyword>
<keyword id="KW-0407">Ion channel</keyword>
<keyword id="KW-0406">Ion transport</keyword>
<keyword id="KW-1017">Isopeptide bond</keyword>
<keyword id="KW-0449">Lipoprotein</keyword>
<keyword id="KW-0472">Membrane</keyword>
<keyword id="KW-0479">Metal-binding</keyword>
<keyword id="KW-0539">Nucleus</keyword>
<keyword id="KW-0564">Palmitate</keyword>
<keyword id="KW-0597">Phosphoprotein</keyword>
<keyword id="KW-0630">Potassium</keyword>
<keyword id="KW-0631">Potassium channel</keyword>
<keyword id="KW-0633">Potassium transport</keyword>
<keyword id="KW-1267">Proteomics identification</keyword>
<keyword id="KW-1185">Reference proteome</keyword>
<keyword id="KW-0677">Repeat</keyword>
<keyword id="KW-0678">Repressor</keyword>
<keyword id="KW-0804">Transcription</keyword>
<keyword id="KW-0805">Transcription regulation</keyword>
<keyword id="KW-0813">Transport</keyword>
<keyword id="KW-0832">Ubl conjugation</keyword>
<keyword id="KW-0851">Voltage-gated channel</keyword>
<evidence type="ECO:0000250" key="1"/>
<evidence type="ECO:0000250" key="2">
    <source>
        <dbReference type="UniProtKB" id="Q9JM47"/>
    </source>
</evidence>
<evidence type="ECO:0000250" key="3">
    <source>
        <dbReference type="UniProtKB" id="Q9QXT8"/>
    </source>
</evidence>
<evidence type="ECO:0000255" key="4">
    <source>
        <dbReference type="PROSITE-ProRule" id="PRU00448"/>
    </source>
</evidence>
<evidence type="ECO:0000256" key="5">
    <source>
        <dbReference type="SAM" id="MobiDB-lite"/>
    </source>
</evidence>
<evidence type="ECO:0000269" key="6">
    <source>
    </source>
</evidence>
<evidence type="ECO:0000269" key="7">
    <source>
    </source>
</evidence>
<evidence type="ECO:0000269" key="8">
    <source>
    </source>
</evidence>
<evidence type="ECO:0000269" key="9">
    <source>
    </source>
</evidence>
<evidence type="ECO:0000269" key="10">
    <source>
    </source>
</evidence>
<evidence type="ECO:0000269" key="11">
    <source>
    </source>
</evidence>
<evidence type="ECO:0000269" key="12">
    <source>
    </source>
</evidence>
<evidence type="ECO:0000269" key="13">
    <source>
    </source>
</evidence>
<evidence type="ECO:0000269" key="14">
    <source>
    </source>
</evidence>
<evidence type="ECO:0000269" key="15">
    <source>
    </source>
</evidence>
<evidence type="ECO:0000269" key="16">
    <source>
    </source>
</evidence>
<evidence type="ECO:0000269" key="17">
    <source>
    </source>
</evidence>
<evidence type="ECO:0000269" key="18">
    <source>
    </source>
</evidence>
<evidence type="ECO:0000269" key="19">
    <source>
    </source>
</evidence>
<evidence type="ECO:0000303" key="20">
    <source>
    </source>
</evidence>
<evidence type="ECO:0000303" key="21">
    <source ref="5"/>
</evidence>
<evidence type="ECO:0000305" key="22"/>
<evidence type="ECO:0007829" key="23">
    <source>
        <dbReference type="PDB" id="2E6W"/>
    </source>
</evidence>
<proteinExistence type="evidence at protein level"/>
<organism>
    <name type="scientific">Homo sapiens</name>
    <name type="common">Human</name>
    <dbReference type="NCBI Taxonomy" id="9606"/>
    <lineage>
        <taxon>Eukaryota</taxon>
        <taxon>Metazoa</taxon>
        <taxon>Chordata</taxon>
        <taxon>Craniata</taxon>
        <taxon>Vertebrata</taxon>
        <taxon>Euteleostomi</taxon>
        <taxon>Mammalia</taxon>
        <taxon>Eutheria</taxon>
        <taxon>Euarchontoglires</taxon>
        <taxon>Primates</taxon>
        <taxon>Haplorrhini</taxon>
        <taxon>Catarrhini</taxon>
        <taxon>Hominidae</taxon>
        <taxon>Homo</taxon>
    </lineage>
</organism>
<sequence length="256" mass="29231">MQPAKEVTKASDGSLLGDLGHTPLSKKEGIKWQRPRLSRQALMRCCLVKWILSSTAPQGSDSSDSELELSTVRHQPEGLDQLQAQTKFTKKELQSLYRGFKNECPTGLVDEDTFKLIYAQFFPQGDATTYAHFLFNAFDADGNGAIHFEDFVVGLSILLRGTVHEKLKWAFNLYDINKDGYITKEEMLAIMKSIYDMMGRHTYPILREDAPAEHVERFFEKMDRNQDGVVTIEEFLEACQKDENIMSSMQLFENVI</sequence>
<comment type="function">
    <text evidence="3">Calcium-dependent transcriptional repressor that binds to the DRE element of genes including PDYN and FOS. Affinity for DNA is reduced upon binding to calcium and enhanced by binding to magnesium. Seems to be involved in nociception (By similarity).</text>
</comment>
<comment type="function">
    <text evidence="6 10 13 14 17">Regulatory subunit of Kv4/D (Shal)-type voltage-gated rapidly inactivating A-type potassium channels, such as KCND2/Kv4.2 and KCND3/Kv4.3. Modulates channel expression at the cell membrane, gating characteristics, inactivation kinetics and rate of recovery from inactivation in a calcium-dependent and isoform-specific manner.</text>
</comment>
<comment type="function">
    <text evidence="7 9 19">May play a role in the regulation of PSEN2 proteolytic processing and apoptosis. Together with PSEN2 involved in modulation of amyloid-beta formation.</text>
</comment>
<comment type="subunit">
    <text evidence="3 8 13 16 17">Binds to DNA as a homomultimer. Dimerization is induced by binding to calcium (PubMed:17962406). Interacts with the C-terminus of PSEN1 and PSEN2 and with PSEN2 CTF subunit. Associates with KCN1. Component of heteromultimeric potassium channels. Identified in potassium channel complexes containing KCND1, KCND2, KCND3, KCNIP1, KCNIP2, KCNIP3, KCNIP4, DPP6 and DPP10 (By similarity). Interacts with KCND2 and KCND3.</text>
</comment>
<comment type="interaction">
    <interactant intactId="EBI-751501">
        <id>Q9Y2W7</id>
    </interactant>
    <interactant intactId="EBI-77613">
        <id>P05067</id>
        <label>APP</label>
    </interactant>
    <organismsDiffer>false</organismsDiffer>
    <experiments>3</experiments>
</comment>
<comment type="interaction">
    <interactant intactId="EBI-751501">
        <id>Q9Y2W7</id>
    </interactant>
    <interactant intactId="EBI-12092171">
        <id>Q12797-6</id>
        <label>ASPH</label>
    </interactant>
    <organismsDiffer>false</organismsDiffer>
    <experiments>3</experiments>
</comment>
<comment type="interaction">
    <interactant intactId="EBI-751501">
        <id>Q9Y2W7</id>
    </interactant>
    <interactant intactId="EBI-2817707">
        <id>Q9BXJ5</id>
        <label>C1QTNF2</label>
    </interactant>
    <organismsDiffer>false</organismsDiffer>
    <experiments>3</experiments>
</comment>
<comment type="interaction">
    <interactant intactId="EBI-751501">
        <id>Q9Y2W7</id>
    </interactant>
    <interactant intactId="EBI-747170">
        <id>Q8N6Q3</id>
        <label>CD177</label>
    </interactant>
    <organismsDiffer>false</organismsDiffer>
    <experiments>9</experiments>
</comment>
<comment type="interaction">
    <interactant intactId="EBI-751501">
        <id>Q9Y2W7</id>
    </interactant>
    <interactant intactId="EBI-17762181">
        <id>O14843</id>
        <label>FFAR3</label>
    </interactant>
    <organismsDiffer>false</organismsDiffer>
    <experiments>3</experiments>
</comment>
<comment type="interaction">
    <interactant intactId="EBI-751501">
        <id>Q9Y2W7</id>
    </interactant>
    <interactant intactId="EBI-4403685">
        <id>Q7Z5G4</id>
        <label>GOLGA7</label>
    </interactant>
    <organismsDiffer>false</organismsDiffer>
    <experiments>3</experiments>
</comment>
<comment type="interaction">
    <interactant intactId="EBI-751501">
        <id>Q9Y2W7</id>
    </interactant>
    <interactant intactId="EBI-475981">
        <id>P08069</id>
        <label>IGF1R</label>
    </interactant>
    <organismsDiffer>false</organismsDiffer>
    <experiments>6</experiments>
</comment>
<comment type="interaction">
    <interactant intactId="EBI-751501">
        <id>Q9Y2W7</id>
    </interactant>
    <interactant intactId="EBI-1030834">
        <id>P40189</id>
        <label>IL6ST</label>
    </interactant>
    <organismsDiffer>false</organismsDiffer>
    <experiments>7</experiments>
</comment>
<comment type="interaction">
    <interactant intactId="EBI-751501">
        <id>Q9Y2W7</id>
    </interactant>
    <interactant intactId="EBI-10238517">
        <id>Q17RA0</id>
        <label>IL6ST</label>
    </interactant>
    <organismsDiffer>false</organismsDiffer>
    <experiments>3</experiments>
</comment>
<comment type="interaction">
    <interactant intactId="EBI-751501">
        <id>Q9Y2W7</id>
    </interactant>
    <interactant intactId="EBI-9089060">
        <id>Q7Z7F0-4</id>
        <label>KHDC4</label>
    </interactant>
    <organismsDiffer>false</organismsDiffer>
    <experiments>3</experiments>
</comment>
<comment type="interaction">
    <interactant intactId="EBI-751501">
        <id>Q9Y2W7</id>
    </interactant>
    <interactant intactId="EBI-8472267">
        <id>P57682</id>
        <label>KLF3</label>
    </interactant>
    <organismsDiffer>false</organismsDiffer>
    <experiments>3</experiments>
</comment>
<comment type="interaction">
    <interactant intactId="EBI-751501">
        <id>Q9Y2W7</id>
    </interactant>
    <interactant intactId="EBI-995373">
        <id>Q7Z434</id>
        <label>MAVS</label>
    </interactant>
    <organismsDiffer>false</organismsDiffer>
    <experiments>3</experiments>
</comment>
<comment type="interaction">
    <interactant intactId="EBI-751501">
        <id>Q9Y2W7</id>
    </interactant>
    <interactant intactId="EBI-25839575">
        <id>Q8WZ73-3</id>
        <label>RFFL</label>
    </interactant>
    <organismsDiffer>false</organismsDiffer>
    <experiments>3</experiments>
</comment>
<comment type="interaction">
    <interactant intactId="EBI-751501">
        <id>Q9Y2W7</id>
    </interactant>
    <interactant intactId="EBI-354112">
        <id>P08865</id>
        <label>RPSA</label>
    </interactant>
    <organismsDiffer>false</organismsDiffer>
    <experiments>3</experiments>
</comment>
<comment type="interaction">
    <interactant intactId="EBI-751501">
        <id>Q9Y2W7</id>
    </interactant>
    <interactant intactId="EBI-10195782">
        <id>P08294</id>
        <label>SOD3</label>
    </interactant>
    <organismsDiffer>false</organismsDiffer>
    <experiments>6</experiments>
</comment>
<comment type="interaction">
    <interactant intactId="EBI-751501">
        <id>Q9Y2W7</id>
    </interactant>
    <interactant intactId="EBI-12304565">
        <id>Q86TD4-2</id>
        <label>SRL</label>
    </interactant>
    <organismsDiffer>false</organismsDiffer>
    <experiments>3</experiments>
</comment>
<comment type="interaction">
    <interactant intactId="EBI-751501">
        <id>Q9Y2W7</id>
    </interactant>
    <interactant intactId="EBI-12090309">
        <id>Q9BXU0</id>
        <label>TEX12</label>
    </interactant>
    <organismsDiffer>false</organismsDiffer>
    <experiments>3</experiments>
</comment>
<comment type="interaction">
    <interactant intactId="EBI-751501">
        <id>Q9Y2W7</id>
    </interactant>
    <interactant intactId="EBI-9089156">
        <id>Q8IUR5-4</id>
        <label>TMTC1</label>
    </interactant>
    <organismsDiffer>false</organismsDiffer>
    <experiments>3</experiments>
</comment>
<comment type="interaction">
    <interactant intactId="EBI-751501">
        <id>Q9Y2W7</id>
    </interactant>
    <interactant intactId="EBI-746479">
        <id>O60844</id>
        <label>ZG16</label>
    </interactant>
    <organismsDiffer>false</organismsDiffer>
    <experiments>3</experiments>
</comment>
<comment type="interaction">
    <interactant intactId="EBI-751501">
        <id>Q9Y2W7</id>
    </interactant>
    <interactant intactId="EBI-17234977">
        <id>A0A1U9X8X8</id>
    </interactant>
    <organismsDiffer>false</organismsDiffer>
    <experiments>3</experiments>
</comment>
<comment type="subcellular location">
    <subcellularLocation>
        <location evidence="17">Cytoplasm</location>
    </subcellularLocation>
    <subcellularLocation>
        <location evidence="13 17">Cell membrane</location>
        <topology evidence="1">Lipid-anchor</topology>
    </subcellularLocation>
    <subcellularLocation>
        <location evidence="8 17">Endoplasmic reticulum</location>
    </subcellularLocation>
    <subcellularLocation>
        <location evidence="8">Golgi apparatus</location>
    </subcellularLocation>
    <subcellularLocation>
        <location evidence="18">Nucleus</location>
    </subcellularLocation>
    <text evidence="8 13 18">Also membrane-bound, associated with the plasma membrane (PubMed:15485870). In the presence of PSEN2 associated with the endoplasmic reticulum and Golgi. The sumoylated form is present only in the nucleus.</text>
</comment>
<comment type="alternative products">
    <event type="alternative splicing"/>
    <isoform>
        <id>Q9Y2W7-1</id>
        <name>1</name>
        <name>KChIP3.1</name>
        <sequence type="displayed"/>
    </isoform>
    <isoform>
        <id>Q9Y2W7-2</id>
        <name>2</name>
        <name>KChIP3.2</name>
        <name>KChIP4.2</name>
        <sequence type="described" ref="VSP_015040"/>
    </isoform>
    <isoform>
        <id>Q9Y2W7-3</id>
        <name>3</name>
        <name>KChip3.x</name>
        <sequence type="described" ref="VSP_040982 VSP_040983"/>
    </isoform>
</comment>
<comment type="tissue specificity">
    <text evidence="12">Highly expressed in brain. Widely expressed at lower levels. Expression levels are elevated in brain cortex regions affected by Alzheimer disease.</text>
</comment>
<comment type="PTM">
    <text evidence="1">Palmitoylated. Palmitoylation enhances association with the plasma membrane (By similarity).</text>
</comment>
<comment type="PTM">
    <text evidence="8">Proteolytically cleaved by caspase-3.</text>
</comment>
<comment type="PTM">
    <text evidence="8 11">Phosphorylation at Ser-63 inhibits cleavage by CASP3.</text>
</comment>
<comment type="similarity">
    <text evidence="22">Belongs to the recoverin family.</text>
</comment>
<feature type="chain" id="PRO_0000073814" description="Calsenilin">
    <location>
        <begin position="1"/>
        <end position="256"/>
    </location>
</feature>
<feature type="domain" description="EF-hand 1; degenerate" evidence="22">
    <location>
        <begin position="67"/>
        <end position="123"/>
    </location>
</feature>
<feature type="domain" description="EF-hand 2" evidence="4">
    <location>
        <begin position="126"/>
        <end position="161"/>
    </location>
</feature>
<feature type="domain" description="EF-hand 3" evidence="4">
    <location>
        <begin position="162"/>
        <end position="197"/>
    </location>
</feature>
<feature type="domain" description="EF-hand 4" evidence="4">
    <location>
        <begin position="210"/>
        <end position="245"/>
    </location>
</feature>
<feature type="region of interest" description="Disordered" evidence="5">
    <location>
        <begin position="1"/>
        <end position="20"/>
    </location>
</feature>
<feature type="region of interest" description="Interaction with KCND2" evidence="1">
    <location>
        <begin position="243"/>
        <end position="256"/>
    </location>
</feature>
<feature type="binding site" evidence="4">
    <location>
        <position position="175"/>
    </location>
    <ligand>
        <name>Ca(2+)</name>
        <dbReference type="ChEBI" id="CHEBI:29108"/>
        <label>1</label>
    </ligand>
</feature>
<feature type="binding site" evidence="4">
    <location>
        <position position="177"/>
    </location>
    <ligand>
        <name>Ca(2+)</name>
        <dbReference type="ChEBI" id="CHEBI:29108"/>
        <label>1</label>
    </ligand>
</feature>
<feature type="binding site" evidence="4">
    <location>
        <position position="179"/>
    </location>
    <ligand>
        <name>Ca(2+)</name>
        <dbReference type="ChEBI" id="CHEBI:29108"/>
        <label>1</label>
    </ligand>
</feature>
<feature type="binding site" evidence="4">
    <location>
        <position position="181"/>
    </location>
    <ligand>
        <name>Ca(2+)</name>
        <dbReference type="ChEBI" id="CHEBI:29108"/>
        <label>1</label>
    </ligand>
</feature>
<feature type="binding site" evidence="4">
    <location>
        <position position="186"/>
    </location>
    <ligand>
        <name>Ca(2+)</name>
        <dbReference type="ChEBI" id="CHEBI:29108"/>
        <label>1</label>
    </ligand>
</feature>
<feature type="binding site" evidence="4">
    <location>
        <position position="223"/>
    </location>
    <ligand>
        <name>Ca(2+)</name>
        <dbReference type="ChEBI" id="CHEBI:29108"/>
        <label>2</label>
    </ligand>
</feature>
<feature type="binding site" evidence="4">
    <location>
        <position position="225"/>
    </location>
    <ligand>
        <name>Ca(2+)</name>
        <dbReference type="ChEBI" id="CHEBI:29108"/>
        <label>2</label>
    </ligand>
</feature>
<feature type="binding site" evidence="4">
    <location>
        <position position="227"/>
    </location>
    <ligand>
        <name>Ca(2+)</name>
        <dbReference type="ChEBI" id="CHEBI:29108"/>
        <label>2</label>
    </ligand>
</feature>
<feature type="binding site" evidence="4">
    <location>
        <position position="234"/>
    </location>
    <ligand>
        <name>Ca(2+)</name>
        <dbReference type="ChEBI" id="CHEBI:29108"/>
        <label>2</label>
    </ligand>
</feature>
<feature type="modified residue" description="Phosphoserine" evidence="2">
    <location>
        <position position="14"/>
    </location>
</feature>
<feature type="modified residue" description="Phosphoserine" evidence="3">
    <location>
        <position position="60"/>
    </location>
</feature>
<feature type="modified residue" description="Phosphoserine; by CK1" evidence="11">
    <location>
        <position position="63"/>
    </location>
</feature>
<feature type="lipid moiety-binding region" description="S-palmitoyl cysteine" evidence="1">
    <location>
        <position position="45"/>
    </location>
</feature>
<feature type="lipid moiety-binding region" description="S-palmitoyl cysteine" evidence="1">
    <location>
        <position position="46"/>
    </location>
</feature>
<feature type="cross-link" description="Glycyl lysine isopeptide (Lys-Gly) (interchain with G-Cter in SUMO1)" evidence="18">
    <location>
        <position position="26"/>
    </location>
</feature>
<feature type="cross-link" description="Glycyl lysine isopeptide (Lys-Gly) (interchain with G-Cter in SUMO1)" evidence="18">
    <location>
        <position position="90"/>
    </location>
</feature>
<feature type="splice variant" id="VSP_040982" description="In isoform 3." evidence="20">
    <location>
        <begin position="1"/>
        <end position="26"/>
    </location>
</feature>
<feature type="splice variant" id="VSP_040983" description="In isoform 3." evidence="20">
    <original>KEGIKWQRPRLSRQALMRCCLVKWILSSTAPQGS</original>
    <variation>MGIQGMELCAMAVVVLLFIAVLKQFGILEPISME</variation>
    <location>
        <begin position="27"/>
        <end position="60"/>
    </location>
</feature>
<feature type="splice variant" id="VSP_015040" description="In isoform 2." evidence="21">
    <location>
        <begin position="103"/>
        <end position="124"/>
    </location>
</feature>
<feature type="sequence variant" id="VAR_048663" description="In dbSNP:rs35658670.">
    <original>A</original>
    <variation>V</variation>
    <location>
        <position position="119"/>
    </location>
</feature>
<feature type="sequence variant" id="VAR_035463" description="In a breast cancer sample; somatic mutation." evidence="15">
    <original>A</original>
    <variation>S</variation>
    <location>
        <position position="170"/>
    </location>
</feature>
<feature type="sequence variant" id="VAR_035464" description="In a breast cancer sample; somatic mutation." evidence="15">
    <original>D</original>
    <variation>Y</variation>
    <location>
        <position position="179"/>
    </location>
</feature>
<feature type="mutagenesis site" description="Abolishes cleavage by caspase-3." evidence="8">
    <original>D</original>
    <variation>A</variation>
    <location>
        <position position="61"/>
    </location>
</feature>
<feature type="mutagenesis site" description="Abolishes cleavage by caspase-3." evidence="8">
    <original>D</original>
    <variation>A</variation>
    <location>
        <position position="64"/>
    </location>
</feature>
<feature type="sequence conflict" description="In Ref. 2; CAB56836/CAB56835." evidence="22" ref="2">
    <original>I</original>
    <variation>V</variation>
    <location>
        <position position="182"/>
    </location>
</feature>
<feature type="sequence conflict" description="In Ref. 2; CAB56836/CAB56835." evidence="22" ref="2">
    <original>R</original>
    <variation>Q</variation>
    <location>
        <position position="207"/>
    </location>
</feature>
<feature type="helix" evidence="23">
    <location>
        <begin position="164"/>
        <end position="174"/>
    </location>
</feature>
<feature type="strand" evidence="23">
    <location>
        <begin position="179"/>
        <end position="182"/>
    </location>
</feature>
<feature type="helix" evidence="23">
    <location>
        <begin position="184"/>
        <end position="193"/>
    </location>
</feature>
<feature type="strand" evidence="23">
    <location>
        <begin position="211"/>
        <end position="213"/>
    </location>
</feature>
<feature type="helix" evidence="23">
    <location>
        <begin position="214"/>
        <end position="222"/>
    </location>
</feature>
<feature type="strand" evidence="23">
    <location>
        <begin position="227"/>
        <end position="231"/>
    </location>
</feature>
<feature type="helix" evidence="23">
    <location>
        <begin position="232"/>
        <end position="239"/>
    </location>
</feature>
<feature type="helix" evidence="23">
    <location>
        <begin position="243"/>
        <end position="254"/>
    </location>
</feature>